<evidence type="ECO:0000250" key="1"/>
<evidence type="ECO:0000255" key="2"/>
<evidence type="ECO:0000305" key="3"/>
<geneLocation type="chloroplast"/>
<sequence>MDLPGPIHDFLLVFLGSGLIVGGLGVVLLTNPIFSAFSLGLVLVCISLFFSLSNSYFVAAAQLLIYVGAINVLILFAVMFMNGSEYSKDLTLWTVGDGITSLVCTSIFISLITTILDTSWYGIIWTTKSNQIIEQDLIGNSQQIGIHLSTDFFLPFELISIILLVSLIGAIAVARQ</sequence>
<protein>
    <recommendedName>
        <fullName>NAD(P)H-quinone oxidoreductase subunit 6, chloroplastic</fullName>
        <ecNumber>7.1.1.-</ecNumber>
    </recommendedName>
    <alternativeName>
        <fullName>NAD(P)H dehydrogenase subunit 6</fullName>
    </alternativeName>
    <alternativeName>
        <fullName>NADH-plastoquinone oxidoreductase subunit 6</fullName>
    </alternativeName>
</protein>
<keyword id="KW-0150">Chloroplast</keyword>
<keyword id="KW-0472">Membrane</keyword>
<keyword id="KW-0520">NAD</keyword>
<keyword id="KW-0521">NADP</keyword>
<keyword id="KW-0934">Plastid</keyword>
<keyword id="KW-0618">Plastoquinone</keyword>
<keyword id="KW-0874">Quinone</keyword>
<keyword id="KW-0793">Thylakoid</keyword>
<keyword id="KW-1278">Translocase</keyword>
<keyword id="KW-0812">Transmembrane</keyword>
<keyword id="KW-1133">Transmembrane helix</keyword>
<keyword id="KW-0813">Transport</keyword>
<name>NU6C_OENEH</name>
<organism>
    <name type="scientific">Oenothera elata subsp. hookeri</name>
    <name type="common">Hooker's evening primrose</name>
    <name type="synonym">Oenothera hookeri</name>
    <dbReference type="NCBI Taxonomy" id="85636"/>
    <lineage>
        <taxon>Eukaryota</taxon>
        <taxon>Viridiplantae</taxon>
        <taxon>Streptophyta</taxon>
        <taxon>Embryophyta</taxon>
        <taxon>Tracheophyta</taxon>
        <taxon>Spermatophyta</taxon>
        <taxon>Magnoliopsida</taxon>
        <taxon>eudicotyledons</taxon>
        <taxon>Gunneridae</taxon>
        <taxon>Pentapetalae</taxon>
        <taxon>rosids</taxon>
        <taxon>malvids</taxon>
        <taxon>Myrtales</taxon>
        <taxon>Onagraceae</taxon>
        <taxon>Onagroideae</taxon>
        <taxon>Onagreae</taxon>
        <taxon>Oenothera</taxon>
    </lineage>
</organism>
<reference key="1">
    <citation type="journal article" date="2000" name="Mol. Gen. Genet.">
        <title>Complete nucleotide sequence of the Oenothera elata plastid chromosome, representing plastome I of the five distinguishable Euoenothera plastomes.</title>
        <authorList>
            <person name="Hupfer H."/>
            <person name="Swiatek M."/>
            <person name="Hornung S."/>
            <person name="Herrmann R.G."/>
            <person name="Maier R.M."/>
            <person name="Chiu W.-L."/>
            <person name="Sears B."/>
        </authorList>
    </citation>
    <scope>NUCLEOTIDE SEQUENCE [LARGE SCALE GENOMIC DNA]</scope>
    <source>
        <strain>cv. Johansen</strain>
    </source>
</reference>
<dbReference type="EC" id="7.1.1.-"/>
<dbReference type="EMBL" id="AJ271079">
    <property type="protein sequence ID" value="CAB67223.1"/>
    <property type="molecule type" value="Genomic_DNA"/>
</dbReference>
<dbReference type="RefSeq" id="NP_084754.1">
    <property type="nucleotide sequence ID" value="NC_002693.2"/>
</dbReference>
<dbReference type="SMR" id="Q9MTH9"/>
<dbReference type="GeneID" id="802785"/>
<dbReference type="GO" id="GO:0009535">
    <property type="term" value="C:chloroplast thylakoid membrane"/>
    <property type="evidence" value="ECO:0007669"/>
    <property type="project" value="UniProtKB-SubCell"/>
</dbReference>
<dbReference type="GO" id="GO:0008137">
    <property type="term" value="F:NADH dehydrogenase (ubiquinone) activity"/>
    <property type="evidence" value="ECO:0007669"/>
    <property type="project" value="InterPro"/>
</dbReference>
<dbReference type="GO" id="GO:0048038">
    <property type="term" value="F:quinone binding"/>
    <property type="evidence" value="ECO:0007669"/>
    <property type="project" value="UniProtKB-KW"/>
</dbReference>
<dbReference type="FunFam" id="1.20.120.1200:FF:000002">
    <property type="entry name" value="NAD(P)H-quinone oxidoreductase subunit 6, chloroplastic"/>
    <property type="match status" value="1"/>
</dbReference>
<dbReference type="Gene3D" id="1.20.120.1200">
    <property type="entry name" value="NADH-ubiquinone/plastoquinone oxidoreductase chain 6, subunit NuoJ"/>
    <property type="match status" value="1"/>
</dbReference>
<dbReference type="InterPro" id="IPR050290">
    <property type="entry name" value="NAD(P)H-Q_Oxidoreduct_6"/>
</dbReference>
<dbReference type="InterPro" id="IPR001457">
    <property type="entry name" value="NADH_UbQ/plastoQ_OxRdtase_su6"/>
</dbReference>
<dbReference type="InterPro" id="IPR042106">
    <property type="entry name" value="Nuo/plastoQ_OxRdtase_6_NuoJ"/>
</dbReference>
<dbReference type="PANTHER" id="PTHR48479">
    <property type="entry name" value="NAD(P)H-QUINONE OXIDOREDUCTASE SUBUNIT 6, CHLOROPLASTIC"/>
    <property type="match status" value="1"/>
</dbReference>
<dbReference type="PANTHER" id="PTHR48479:SF1">
    <property type="entry name" value="NAD(P)H-QUINONE OXIDOREDUCTASE SUBUNIT 6, CHLOROPLASTIC"/>
    <property type="match status" value="1"/>
</dbReference>
<dbReference type="Pfam" id="PF00499">
    <property type="entry name" value="Oxidored_q3"/>
    <property type="match status" value="1"/>
</dbReference>
<proteinExistence type="inferred from homology"/>
<comment type="function">
    <text evidence="1">NDH shuttles electrons from NAD(P)H:plastoquinone, via FMN and iron-sulfur (Fe-S) centers, to quinones in the photosynthetic chain and possibly in a chloroplast respiratory chain. The immediate electron acceptor for the enzyme in this species is believed to be plastoquinone. Couples the redox reaction to proton translocation, and thus conserves the redox energy in a proton gradient (By similarity).</text>
</comment>
<comment type="catalytic activity">
    <reaction>
        <text>a plastoquinone + NADH + (n+1) H(+)(in) = a plastoquinol + NAD(+) + n H(+)(out)</text>
        <dbReference type="Rhea" id="RHEA:42608"/>
        <dbReference type="Rhea" id="RHEA-COMP:9561"/>
        <dbReference type="Rhea" id="RHEA-COMP:9562"/>
        <dbReference type="ChEBI" id="CHEBI:15378"/>
        <dbReference type="ChEBI" id="CHEBI:17757"/>
        <dbReference type="ChEBI" id="CHEBI:57540"/>
        <dbReference type="ChEBI" id="CHEBI:57945"/>
        <dbReference type="ChEBI" id="CHEBI:62192"/>
    </reaction>
</comment>
<comment type="catalytic activity">
    <reaction>
        <text>a plastoquinone + NADPH + (n+1) H(+)(in) = a plastoquinol + NADP(+) + n H(+)(out)</text>
        <dbReference type="Rhea" id="RHEA:42612"/>
        <dbReference type="Rhea" id="RHEA-COMP:9561"/>
        <dbReference type="Rhea" id="RHEA-COMP:9562"/>
        <dbReference type="ChEBI" id="CHEBI:15378"/>
        <dbReference type="ChEBI" id="CHEBI:17757"/>
        <dbReference type="ChEBI" id="CHEBI:57783"/>
        <dbReference type="ChEBI" id="CHEBI:58349"/>
        <dbReference type="ChEBI" id="CHEBI:62192"/>
    </reaction>
</comment>
<comment type="subunit">
    <text evidence="1">NDH is composed of at least 16 different subunits, 5 of which are encoded in the nucleus.</text>
</comment>
<comment type="subcellular location">
    <subcellularLocation>
        <location evidence="1">Plastid</location>
        <location evidence="1">Chloroplast thylakoid membrane</location>
        <topology evidence="1">Multi-pass membrane protein</topology>
    </subcellularLocation>
</comment>
<comment type="similarity">
    <text evidence="3">Belongs to the complex I subunit 6 family.</text>
</comment>
<accession>Q9MTH9</accession>
<feature type="chain" id="PRO_0000118359" description="NAD(P)H-quinone oxidoreductase subunit 6, chloroplastic">
    <location>
        <begin position="1"/>
        <end position="176"/>
    </location>
</feature>
<feature type="transmembrane region" description="Helical" evidence="2">
    <location>
        <begin position="10"/>
        <end position="30"/>
    </location>
</feature>
<feature type="transmembrane region" description="Helical" evidence="2">
    <location>
        <begin position="32"/>
        <end position="52"/>
    </location>
</feature>
<feature type="transmembrane region" description="Helical" evidence="2">
    <location>
        <begin position="61"/>
        <end position="81"/>
    </location>
</feature>
<feature type="transmembrane region" description="Helical" evidence="2">
    <location>
        <begin position="92"/>
        <end position="112"/>
    </location>
</feature>
<feature type="transmembrane region" description="Helical" evidence="2">
    <location>
        <begin position="152"/>
        <end position="172"/>
    </location>
</feature>
<gene>
    <name type="primary">ndhG</name>
</gene>